<sequence length="165" mass="19353">MKTSRLPIAIQQAVMRRLWEKLAQANLKLGRNYPEPKLSYTQRGTSAGTAWLESYEIRLNPVLLLENSEAFIEEVVPHELAHLLVWKHFGRVAPHGKEWKWMMESVLGVPARRTHQFELQSVRRNTFPYRCKCQEHQLTVRRHNRVVRGEAVYRCVHCGEQLTAK</sequence>
<protein>
    <recommendedName>
        <fullName evidence="1">Protein SprT</fullName>
    </recommendedName>
</protein>
<dbReference type="EMBL" id="CU928158">
    <property type="protein sequence ID" value="CAQ90376.1"/>
    <property type="molecule type" value="Genomic_DNA"/>
</dbReference>
<dbReference type="RefSeq" id="WP_015953694.1">
    <property type="nucleotide sequence ID" value="NC_011740.1"/>
</dbReference>
<dbReference type="SMR" id="B7LPR1"/>
<dbReference type="GeneID" id="75060499"/>
<dbReference type="KEGG" id="efe:EFER_2883"/>
<dbReference type="HOGENOM" id="CLU_113336_0_1_6"/>
<dbReference type="OrthoDB" id="267364at2"/>
<dbReference type="Proteomes" id="UP000000745">
    <property type="component" value="Chromosome"/>
</dbReference>
<dbReference type="GO" id="GO:0005737">
    <property type="term" value="C:cytoplasm"/>
    <property type="evidence" value="ECO:0007669"/>
    <property type="project" value="UniProtKB-SubCell"/>
</dbReference>
<dbReference type="GO" id="GO:0008270">
    <property type="term" value="F:zinc ion binding"/>
    <property type="evidence" value="ECO:0007669"/>
    <property type="project" value="UniProtKB-UniRule"/>
</dbReference>
<dbReference type="GO" id="GO:0006950">
    <property type="term" value="P:response to stress"/>
    <property type="evidence" value="ECO:0007669"/>
    <property type="project" value="UniProtKB-ARBA"/>
</dbReference>
<dbReference type="Gene3D" id="3.30.2010.10">
    <property type="entry name" value="Metalloproteases ('zincins'), catalytic domain"/>
    <property type="match status" value="1"/>
</dbReference>
<dbReference type="HAMAP" id="MF_00746">
    <property type="entry name" value="SprT"/>
    <property type="match status" value="1"/>
</dbReference>
<dbReference type="InterPro" id="IPR006640">
    <property type="entry name" value="SprT-like_domain"/>
</dbReference>
<dbReference type="InterPro" id="IPR035240">
    <property type="entry name" value="SprT_Zn_ribbon"/>
</dbReference>
<dbReference type="InterPro" id="IPR023483">
    <property type="entry name" value="Uncharacterised_SprT"/>
</dbReference>
<dbReference type="NCBIfam" id="NF003421">
    <property type="entry name" value="PRK04860.1"/>
    <property type="match status" value="1"/>
</dbReference>
<dbReference type="PANTHER" id="PTHR38773">
    <property type="entry name" value="PROTEIN SPRT"/>
    <property type="match status" value="1"/>
</dbReference>
<dbReference type="PANTHER" id="PTHR38773:SF1">
    <property type="entry name" value="PROTEIN SPRT"/>
    <property type="match status" value="1"/>
</dbReference>
<dbReference type="Pfam" id="PF10263">
    <property type="entry name" value="SprT-like"/>
    <property type="match status" value="1"/>
</dbReference>
<dbReference type="Pfam" id="PF17283">
    <property type="entry name" value="Zn_ribbon_SprT"/>
    <property type="match status" value="1"/>
</dbReference>
<dbReference type="SMART" id="SM00731">
    <property type="entry name" value="SprT"/>
    <property type="match status" value="1"/>
</dbReference>
<dbReference type="PROSITE" id="PS00142">
    <property type="entry name" value="ZINC_PROTEASE"/>
    <property type="match status" value="1"/>
</dbReference>
<name>SPRT_ESCF3</name>
<comment type="cofactor">
    <cofactor evidence="1">
        <name>Zn(2+)</name>
        <dbReference type="ChEBI" id="CHEBI:29105"/>
    </cofactor>
    <text evidence="1">Binds 1 zinc ion.</text>
</comment>
<comment type="subcellular location">
    <subcellularLocation>
        <location evidence="1">Cytoplasm</location>
    </subcellularLocation>
</comment>
<comment type="similarity">
    <text evidence="1">Belongs to the SprT family.</text>
</comment>
<feature type="chain" id="PRO_1000133243" description="Protein SprT">
    <location>
        <begin position="1"/>
        <end position="165"/>
    </location>
</feature>
<feature type="domain" description="SprT-like" evidence="1">
    <location>
        <begin position="22"/>
        <end position="163"/>
    </location>
</feature>
<feature type="active site" evidence="1">
    <location>
        <position position="79"/>
    </location>
</feature>
<feature type="binding site" evidence="1">
    <location>
        <position position="78"/>
    </location>
    <ligand>
        <name>Zn(2+)</name>
        <dbReference type="ChEBI" id="CHEBI:29105"/>
    </ligand>
</feature>
<feature type="binding site" evidence="1">
    <location>
        <position position="82"/>
    </location>
    <ligand>
        <name>Zn(2+)</name>
        <dbReference type="ChEBI" id="CHEBI:29105"/>
    </ligand>
</feature>
<keyword id="KW-0963">Cytoplasm</keyword>
<keyword id="KW-0479">Metal-binding</keyword>
<keyword id="KW-0862">Zinc</keyword>
<reference key="1">
    <citation type="journal article" date="2009" name="PLoS Genet.">
        <title>Organised genome dynamics in the Escherichia coli species results in highly diverse adaptive paths.</title>
        <authorList>
            <person name="Touchon M."/>
            <person name="Hoede C."/>
            <person name="Tenaillon O."/>
            <person name="Barbe V."/>
            <person name="Baeriswyl S."/>
            <person name="Bidet P."/>
            <person name="Bingen E."/>
            <person name="Bonacorsi S."/>
            <person name="Bouchier C."/>
            <person name="Bouvet O."/>
            <person name="Calteau A."/>
            <person name="Chiapello H."/>
            <person name="Clermont O."/>
            <person name="Cruveiller S."/>
            <person name="Danchin A."/>
            <person name="Diard M."/>
            <person name="Dossat C."/>
            <person name="Karoui M.E."/>
            <person name="Frapy E."/>
            <person name="Garry L."/>
            <person name="Ghigo J.M."/>
            <person name="Gilles A.M."/>
            <person name="Johnson J."/>
            <person name="Le Bouguenec C."/>
            <person name="Lescat M."/>
            <person name="Mangenot S."/>
            <person name="Martinez-Jehanne V."/>
            <person name="Matic I."/>
            <person name="Nassif X."/>
            <person name="Oztas S."/>
            <person name="Petit M.A."/>
            <person name="Pichon C."/>
            <person name="Rouy Z."/>
            <person name="Ruf C.S."/>
            <person name="Schneider D."/>
            <person name="Tourret J."/>
            <person name="Vacherie B."/>
            <person name="Vallenet D."/>
            <person name="Medigue C."/>
            <person name="Rocha E.P.C."/>
            <person name="Denamur E."/>
        </authorList>
    </citation>
    <scope>NUCLEOTIDE SEQUENCE [LARGE SCALE GENOMIC DNA]</scope>
    <source>
        <strain>ATCC 35469 / DSM 13698 / BCRC 15582 / CCUG 18766 / IAM 14443 / JCM 21226 / LMG 7866 / NBRC 102419 / NCTC 12128 / CDC 0568-73</strain>
    </source>
</reference>
<organism>
    <name type="scientific">Escherichia fergusonii (strain ATCC 35469 / DSM 13698 / CCUG 18766 / IAM 14443 / JCM 21226 / LMG 7866 / NBRC 102419 / NCTC 12128 / CDC 0568-73)</name>
    <dbReference type="NCBI Taxonomy" id="585054"/>
    <lineage>
        <taxon>Bacteria</taxon>
        <taxon>Pseudomonadati</taxon>
        <taxon>Pseudomonadota</taxon>
        <taxon>Gammaproteobacteria</taxon>
        <taxon>Enterobacterales</taxon>
        <taxon>Enterobacteriaceae</taxon>
        <taxon>Escherichia</taxon>
    </lineage>
</organism>
<evidence type="ECO:0000255" key="1">
    <source>
        <dbReference type="HAMAP-Rule" id="MF_00746"/>
    </source>
</evidence>
<proteinExistence type="inferred from homology"/>
<gene>
    <name evidence="1" type="primary">sprT</name>
    <name type="ordered locus">EFER_2883</name>
</gene>
<accession>B7LPR1</accession>